<gene>
    <name evidence="7" type="primary">MTERF9</name>
    <name evidence="9" type="ordered locus">At5g55580</name>
    <name evidence="10" type="ORF">MDF20.2</name>
</gene>
<name>MTEF9_ARATH</name>
<comment type="function">
    <text evidence="5">Transcription termination factor required for processing and steady-state levels of plastid transcripts. May play a role in response to abiotic stresses.</text>
</comment>
<comment type="subcellular location">
    <subcellularLocation>
        <location evidence="3">Plastid</location>
        <location evidence="3">Chloroplast</location>
    </subcellularLocation>
</comment>
<comment type="disruption phenotype">
    <text evidence="4 5">Variegated leaves, reduced growth and altered structure of chloroplasts. Altered responses to sugars, abscisic acid (ABA), salt and osmotic stresses during seedling establishment (PubMed:25393651). Altered root and shoot meristem function resulting in reduced organ growth (PubMed:21599977).</text>
</comment>
<comment type="similarity">
    <text evidence="8">Belongs to the mTERF family.</text>
</comment>
<evidence type="ECO:0000255" key="1"/>
<evidence type="ECO:0000256" key="2">
    <source>
        <dbReference type="SAM" id="MobiDB-lite"/>
    </source>
</evidence>
<evidence type="ECO:0000269" key="3">
    <source>
    </source>
</evidence>
<evidence type="ECO:0000269" key="4">
    <source>
    </source>
</evidence>
<evidence type="ECO:0000269" key="5">
    <source>
    </source>
</evidence>
<evidence type="ECO:0000303" key="6">
    <source>
    </source>
</evidence>
<evidence type="ECO:0000303" key="7">
    <source>
    </source>
</evidence>
<evidence type="ECO:0000305" key="8"/>
<evidence type="ECO:0000312" key="9">
    <source>
        <dbReference type="Araport" id="AT5G55580"/>
    </source>
</evidence>
<evidence type="ECO:0000312" key="10">
    <source>
        <dbReference type="EMBL" id="BAB09225.1"/>
    </source>
</evidence>
<protein>
    <recommendedName>
        <fullName evidence="8">Transcription termination factor MTERF9, chloroplastic</fullName>
    </recommendedName>
    <alternativeName>
        <fullName evidence="7">Mitochondrial transcription termination factor 9</fullName>
    </alternativeName>
    <alternativeName>
        <fullName evidence="6">Protein TWIRT1</fullName>
    </alternativeName>
</protein>
<sequence>MAGFSLYCFKNPRILFTLPSESPLFVLGSDKCSPATRRPSRKTRGFVVTYAHSNPKIINPKKKSRYGQTLSPYDSDEDDDDDDDDDDDDWLLNDDFAEVTEYEKKKPKSHKQTIAKKSVKKGIVKPEESETDEDDLDLGISPNATSEKKKESWRLDGRGKMSSRKYVEKLYPRLAEEIDIDPKCVPLLDYLSTFGLKESHFVQMYERHMPSLQINVFSAQERLDYLLSVGVKHRDIKRMLLRQPQILQYTVENNLKAHISFLMGLGIPNSKIGQIVAATPSLFSYSVENSLRPTIRYLIEEVGIKETDVGKVVQLSPQILVQRLDITWNTRYMFLSKELGAPRDSVVKMVKKHPQLLHYSIDDGFLPRINFLRSIGMCNSDILKVLTSLTQVLSLSLEDNLKPKYMYLVNELNNEVHILTKYPMYLSLSLDQRIRPRHRFLVELKKVRKGPFPLSSLVPNDESFCQQWAGTSVDTYLAFRQRLLLKEFANKYDKRG</sequence>
<proteinExistence type="evidence at transcript level"/>
<keyword id="KW-0150">Chloroplast</keyword>
<keyword id="KW-0934">Plastid</keyword>
<keyword id="KW-1185">Reference proteome</keyword>
<keyword id="KW-0804">Transcription</keyword>
<keyword id="KW-0805">Transcription regulation</keyword>
<keyword id="KW-0806">Transcription termination</keyword>
<keyword id="KW-0809">Transit peptide</keyword>
<accession>Q9FM80</accession>
<organism>
    <name type="scientific">Arabidopsis thaliana</name>
    <name type="common">Mouse-ear cress</name>
    <dbReference type="NCBI Taxonomy" id="3702"/>
    <lineage>
        <taxon>Eukaryota</taxon>
        <taxon>Viridiplantae</taxon>
        <taxon>Streptophyta</taxon>
        <taxon>Embryophyta</taxon>
        <taxon>Tracheophyta</taxon>
        <taxon>Spermatophyta</taxon>
        <taxon>Magnoliopsida</taxon>
        <taxon>eudicotyledons</taxon>
        <taxon>Gunneridae</taxon>
        <taxon>Pentapetalae</taxon>
        <taxon>rosids</taxon>
        <taxon>malvids</taxon>
        <taxon>Brassicales</taxon>
        <taxon>Brassicaceae</taxon>
        <taxon>Camelineae</taxon>
        <taxon>Arabidopsis</taxon>
    </lineage>
</organism>
<reference key="1">
    <citation type="journal article" date="1998" name="DNA Res.">
        <title>Structural analysis of Arabidopsis thaliana chromosome 5. IV. Sequence features of the regions of 1,456,315 bp covered by nineteen physically assigned P1 and TAC clones.</title>
        <authorList>
            <person name="Sato S."/>
            <person name="Kaneko T."/>
            <person name="Kotani H."/>
            <person name="Nakamura Y."/>
            <person name="Asamizu E."/>
            <person name="Miyajima N."/>
            <person name="Tabata S."/>
        </authorList>
    </citation>
    <scope>NUCLEOTIDE SEQUENCE [LARGE SCALE GENOMIC DNA]</scope>
    <source>
        <strain>cv. Columbia</strain>
    </source>
</reference>
<reference key="2">
    <citation type="journal article" date="2017" name="Plant J.">
        <title>Araport11: a complete reannotation of the Arabidopsis thaliana reference genome.</title>
        <authorList>
            <person name="Cheng C.Y."/>
            <person name="Krishnakumar V."/>
            <person name="Chan A.P."/>
            <person name="Thibaud-Nissen F."/>
            <person name="Schobel S."/>
            <person name="Town C.D."/>
        </authorList>
    </citation>
    <scope>GENOME REANNOTATION</scope>
    <source>
        <strain>cv. Columbia</strain>
    </source>
</reference>
<reference key="3">
    <citation type="journal article" date="2003" name="Science">
        <title>Empirical analysis of transcriptional activity in the Arabidopsis genome.</title>
        <authorList>
            <person name="Yamada K."/>
            <person name="Lim J."/>
            <person name="Dale J.M."/>
            <person name="Chen H."/>
            <person name="Shinn P."/>
            <person name="Palm C.J."/>
            <person name="Southwick A.M."/>
            <person name="Wu H.C."/>
            <person name="Kim C.J."/>
            <person name="Nguyen M."/>
            <person name="Pham P.K."/>
            <person name="Cheuk R.F."/>
            <person name="Karlin-Newmann G."/>
            <person name="Liu S.X."/>
            <person name="Lam B."/>
            <person name="Sakano H."/>
            <person name="Wu T."/>
            <person name="Yu G."/>
            <person name="Miranda M."/>
            <person name="Quach H.L."/>
            <person name="Tripp M."/>
            <person name="Chang C.H."/>
            <person name="Lee J.M."/>
            <person name="Toriumi M.J."/>
            <person name="Chan M.M."/>
            <person name="Tang C.C."/>
            <person name="Onodera C.S."/>
            <person name="Deng J.M."/>
            <person name="Akiyama K."/>
            <person name="Ansari Y."/>
            <person name="Arakawa T."/>
            <person name="Banh J."/>
            <person name="Banno F."/>
            <person name="Bowser L."/>
            <person name="Brooks S.Y."/>
            <person name="Carninci P."/>
            <person name="Chao Q."/>
            <person name="Choy N."/>
            <person name="Enju A."/>
            <person name="Goldsmith A.D."/>
            <person name="Gurjal M."/>
            <person name="Hansen N.F."/>
            <person name="Hayashizaki Y."/>
            <person name="Johnson-Hopson C."/>
            <person name="Hsuan V.W."/>
            <person name="Iida K."/>
            <person name="Karnes M."/>
            <person name="Khan S."/>
            <person name="Koesema E."/>
            <person name="Ishida J."/>
            <person name="Jiang P.X."/>
            <person name="Jones T."/>
            <person name="Kawai J."/>
            <person name="Kamiya A."/>
            <person name="Meyers C."/>
            <person name="Nakajima M."/>
            <person name="Narusaka M."/>
            <person name="Seki M."/>
            <person name="Sakurai T."/>
            <person name="Satou M."/>
            <person name="Tamse R."/>
            <person name="Vaysberg M."/>
            <person name="Wallender E.K."/>
            <person name="Wong C."/>
            <person name="Yamamura Y."/>
            <person name="Yuan S."/>
            <person name="Shinozaki K."/>
            <person name="Davis R.W."/>
            <person name="Theologis A."/>
            <person name="Ecker J.R."/>
        </authorList>
    </citation>
    <scope>NUCLEOTIDE SEQUENCE [LARGE SCALE MRNA]</scope>
    <source>
        <strain>cv. Columbia</strain>
    </source>
</reference>
<reference key="4">
    <citation type="journal article" date="2011" name="BMC Genomics">
        <title>Identification of factors required for meristem function in Arabidopsis using a novel next generation sequencing fast forward genetics approach.</title>
        <authorList>
            <person name="Mokry M."/>
            <person name="Nijman I.J."/>
            <person name="van Dijken A."/>
            <person name="Benjamins R."/>
            <person name="Heidstra R."/>
            <person name="Scheres B."/>
            <person name="Cuppen E."/>
        </authorList>
    </citation>
    <scope>DISRUPTION PHENOTYPE</scope>
</reference>
<reference key="5">
    <citation type="journal article" date="2011" name="Proc. Natl. Acad. Sci. U.S.A.">
        <title>Plastid gene expression and plant development require a plastidic protein of the mitochondrial transcription termination factor family.</title>
        <authorList>
            <person name="Babiychuk E."/>
            <person name="Vandepoele K."/>
            <person name="Wissing J."/>
            <person name="Garcia-Diaz M."/>
            <person name="De Rycke R."/>
            <person name="Akbari H."/>
            <person name="Joubes J."/>
            <person name="Beeckman T."/>
            <person name="Jaensch L."/>
            <person name="Frentzen M."/>
            <person name="Van Montagu M.C."/>
            <person name="Kushnir S."/>
        </authorList>
    </citation>
    <scope>SUBCELLULAR LOCATION</scope>
</reference>
<reference key="6">
    <citation type="journal article" date="2012" name="Front. Plant Sci.">
        <title>Arabidopsis thaliana mTERF proteins: evolution and functional classification.</title>
        <authorList>
            <person name="Kleine T."/>
        </authorList>
    </citation>
    <scope>GENE FAMILY</scope>
</reference>
<reference key="7">
    <citation type="journal article" date="2015" name="Physiol. Plantarum">
        <title>Mutations in the plant-conserved MTERF9 alter chloroplast gene expression, development and tolerance to abiotic stress in Arabidopsis thaliana.</title>
        <authorList>
            <person name="Robles P."/>
            <person name="Micol J.L."/>
            <person name="Quesada V."/>
        </authorList>
    </citation>
    <scope>FUNCTION</scope>
    <scope>DISRUPTION PHENOTYPE</scope>
</reference>
<dbReference type="EMBL" id="AB009050">
    <property type="protein sequence ID" value="BAB09225.1"/>
    <property type="molecule type" value="Genomic_DNA"/>
</dbReference>
<dbReference type="EMBL" id="CP002688">
    <property type="protein sequence ID" value="AED96652.1"/>
    <property type="molecule type" value="Genomic_DNA"/>
</dbReference>
<dbReference type="EMBL" id="AY062691">
    <property type="protein sequence ID" value="AAL32769.1"/>
    <property type="molecule type" value="mRNA"/>
</dbReference>
<dbReference type="EMBL" id="BT000141">
    <property type="protein sequence ID" value="AAN15460.1"/>
    <property type="molecule type" value="mRNA"/>
</dbReference>
<dbReference type="RefSeq" id="NP_200369.1">
    <property type="nucleotide sequence ID" value="NM_124940.4"/>
</dbReference>
<dbReference type="SMR" id="Q9FM80"/>
<dbReference type="FunCoup" id="Q9FM80">
    <property type="interactions" value="1324"/>
</dbReference>
<dbReference type="STRING" id="3702.Q9FM80"/>
<dbReference type="iPTMnet" id="Q9FM80"/>
<dbReference type="PaxDb" id="3702-AT5G55580.1"/>
<dbReference type="EnsemblPlants" id="AT5G55580.1">
    <property type="protein sequence ID" value="AT5G55580.1"/>
    <property type="gene ID" value="AT5G55580"/>
</dbReference>
<dbReference type="GeneID" id="835652"/>
<dbReference type="Gramene" id="AT5G55580.1">
    <property type="protein sequence ID" value="AT5G55580.1"/>
    <property type="gene ID" value="AT5G55580"/>
</dbReference>
<dbReference type="KEGG" id="ath:AT5G55580"/>
<dbReference type="Araport" id="AT5G55580"/>
<dbReference type="TAIR" id="AT5G55580">
    <property type="gene designation" value="MTERF9"/>
</dbReference>
<dbReference type="eggNOG" id="KOG1267">
    <property type="taxonomic scope" value="Eukaryota"/>
</dbReference>
<dbReference type="HOGENOM" id="CLU_032090_2_1_1"/>
<dbReference type="InParanoid" id="Q9FM80"/>
<dbReference type="PhylomeDB" id="Q9FM80"/>
<dbReference type="PRO" id="PR:Q9FM80"/>
<dbReference type="Proteomes" id="UP000006548">
    <property type="component" value="Chromosome 5"/>
</dbReference>
<dbReference type="ExpressionAtlas" id="Q9FM80">
    <property type="expression patterns" value="baseline and differential"/>
</dbReference>
<dbReference type="GO" id="GO:0009507">
    <property type="term" value="C:chloroplast"/>
    <property type="evidence" value="ECO:0000314"/>
    <property type="project" value="TAIR"/>
</dbReference>
<dbReference type="GO" id="GO:0003690">
    <property type="term" value="F:double-stranded DNA binding"/>
    <property type="evidence" value="ECO:0007669"/>
    <property type="project" value="InterPro"/>
</dbReference>
<dbReference type="GO" id="GO:1904821">
    <property type="term" value="P:chloroplast disassembly"/>
    <property type="evidence" value="ECO:0000315"/>
    <property type="project" value="TAIR"/>
</dbReference>
<dbReference type="GO" id="GO:0009658">
    <property type="term" value="P:chloroplast organization"/>
    <property type="evidence" value="ECO:0000315"/>
    <property type="project" value="TAIR"/>
</dbReference>
<dbReference type="GO" id="GO:0006353">
    <property type="term" value="P:DNA-templated transcription termination"/>
    <property type="evidence" value="ECO:0007669"/>
    <property type="project" value="UniProtKB-KW"/>
</dbReference>
<dbReference type="GO" id="GO:0006355">
    <property type="term" value="P:regulation of DNA-templated transcription"/>
    <property type="evidence" value="ECO:0000270"/>
    <property type="project" value="TAIR"/>
</dbReference>
<dbReference type="GO" id="GO:0009651">
    <property type="term" value="P:response to salt stress"/>
    <property type="evidence" value="ECO:0000315"/>
    <property type="project" value="TAIR"/>
</dbReference>
<dbReference type="GO" id="GO:0048364">
    <property type="term" value="P:root development"/>
    <property type="evidence" value="ECO:0000315"/>
    <property type="project" value="TAIR"/>
</dbReference>
<dbReference type="GO" id="GO:0048367">
    <property type="term" value="P:shoot system development"/>
    <property type="evidence" value="ECO:0000315"/>
    <property type="project" value="TAIR"/>
</dbReference>
<dbReference type="GO" id="GO:0010343">
    <property type="term" value="P:singlet oxygen-mediated programmed cell death"/>
    <property type="evidence" value="ECO:0000315"/>
    <property type="project" value="TAIR"/>
</dbReference>
<dbReference type="FunFam" id="1.25.70.10:FF:000006">
    <property type="entry name" value="Transcription termination factor MTERF9, chloroplastic"/>
    <property type="match status" value="1"/>
</dbReference>
<dbReference type="Gene3D" id="1.25.70.10">
    <property type="entry name" value="Transcription termination factor 3, mitochondrial"/>
    <property type="match status" value="1"/>
</dbReference>
<dbReference type="InterPro" id="IPR003690">
    <property type="entry name" value="MTERF"/>
</dbReference>
<dbReference type="InterPro" id="IPR038538">
    <property type="entry name" value="MTERF_sf"/>
</dbReference>
<dbReference type="PANTHER" id="PTHR13068">
    <property type="entry name" value="CGI-12 PROTEIN-RELATED"/>
    <property type="match status" value="1"/>
</dbReference>
<dbReference type="PANTHER" id="PTHR13068:SF151">
    <property type="entry name" value="TRANSCRIPTION TERMINATION FACTOR MTERF9, CHLOROPLASTIC"/>
    <property type="match status" value="1"/>
</dbReference>
<dbReference type="Pfam" id="PF02536">
    <property type="entry name" value="mTERF"/>
    <property type="match status" value="1"/>
</dbReference>
<dbReference type="SMART" id="SM00733">
    <property type="entry name" value="Mterf"/>
    <property type="match status" value="6"/>
</dbReference>
<feature type="transit peptide" description="Chloroplast" evidence="1">
    <location>
        <begin position="1"/>
        <end position="44"/>
    </location>
</feature>
<feature type="chain" id="PRO_0000436201" description="Transcription termination factor MTERF9, chloroplastic">
    <location>
        <begin position="45"/>
        <end position="496"/>
    </location>
</feature>
<feature type="region of interest" description="Disordered" evidence="2">
    <location>
        <begin position="57"/>
        <end position="90"/>
    </location>
</feature>
<feature type="region of interest" description="Disordered" evidence="2">
    <location>
        <begin position="102"/>
        <end position="155"/>
    </location>
</feature>
<feature type="compositionally biased region" description="Acidic residues" evidence="2">
    <location>
        <begin position="74"/>
        <end position="90"/>
    </location>
</feature>
<feature type="compositionally biased region" description="Basic residues" evidence="2">
    <location>
        <begin position="105"/>
        <end position="123"/>
    </location>
</feature>
<feature type="compositionally biased region" description="Basic and acidic residues" evidence="2">
    <location>
        <begin position="146"/>
        <end position="155"/>
    </location>
</feature>